<gene>
    <name evidence="1" type="primary">rplY</name>
    <name type="ordered locus">AB57_0881</name>
</gene>
<comment type="function">
    <text evidence="1">This is one of the proteins that binds to the 5S RNA in the ribosome where it forms part of the central protuberance.</text>
</comment>
<comment type="subunit">
    <text evidence="1">Part of the 50S ribosomal subunit; part of the 5S rRNA/L5/L18/L25 subcomplex. Contacts the 5S rRNA. Binds to the 5S rRNA independently of L5 and L18.</text>
</comment>
<comment type="similarity">
    <text evidence="1">Belongs to the bacterial ribosomal protein bL25 family.</text>
</comment>
<feature type="chain" id="PRO_1000142571" description="Large ribosomal subunit protein bL25">
    <location>
        <begin position="1"/>
        <end position="98"/>
    </location>
</feature>
<feature type="region of interest" description="Disordered" evidence="2">
    <location>
        <begin position="1"/>
        <end position="23"/>
    </location>
</feature>
<feature type="strand" evidence="4">
    <location>
        <begin position="4"/>
        <end position="10"/>
    </location>
</feature>
<feature type="turn" evidence="4">
    <location>
        <begin position="13"/>
        <end position="15"/>
    </location>
</feature>
<feature type="helix" evidence="4">
    <location>
        <begin position="18"/>
        <end position="26"/>
    </location>
</feature>
<feature type="strand" evidence="4">
    <location>
        <begin position="29"/>
        <end position="36"/>
    </location>
</feature>
<feature type="strand" evidence="4">
    <location>
        <begin position="39"/>
        <end position="47"/>
    </location>
</feature>
<feature type="helix" evidence="4">
    <location>
        <begin position="48"/>
        <end position="56"/>
    </location>
</feature>
<feature type="helix" evidence="4">
    <location>
        <begin position="59"/>
        <end position="62"/>
    </location>
</feature>
<feature type="strand" evidence="4">
    <location>
        <begin position="65"/>
        <end position="69"/>
    </location>
</feature>
<feature type="strand" evidence="4">
    <location>
        <begin position="72"/>
        <end position="83"/>
    </location>
</feature>
<feature type="turn" evidence="4">
    <location>
        <begin position="85"/>
        <end position="87"/>
    </location>
</feature>
<feature type="strand" evidence="4">
    <location>
        <begin position="90"/>
        <end position="97"/>
    </location>
</feature>
<organism>
    <name type="scientific">Acinetobacter baumannii (strain AB0057)</name>
    <dbReference type="NCBI Taxonomy" id="480119"/>
    <lineage>
        <taxon>Bacteria</taxon>
        <taxon>Pseudomonadati</taxon>
        <taxon>Pseudomonadota</taxon>
        <taxon>Gammaproteobacteria</taxon>
        <taxon>Moraxellales</taxon>
        <taxon>Moraxellaceae</taxon>
        <taxon>Acinetobacter</taxon>
        <taxon>Acinetobacter calcoaceticus/baumannii complex</taxon>
    </lineage>
</organism>
<name>RL25_ACIB5</name>
<reference key="1">
    <citation type="journal article" date="2008" name="J. Bacteriol.">
        <title>Comparative genome sequence analysis of multidrug-resistant Acinetobacter baumannii.</title>
        <authorList>
            <person name="Adams M.D."/>
            <person name="Goglin K."/>
            <person name="Molyneaux N."/>
            <person name="Hujer K.M."/>
            <person name="Lavender H."/>
            <person name="Jamison J.J."/>
            <person name="MacDonald I.J."/>
            <person name="Martin K.M."/>
            <person name="Russo T."/>
            <person name="Campagnari A.A."/>
            <person name="Hujer A.M."/>
            <person name="Bonomo R.A."/>
            <person name="Gill S.R."/>
        </authorList>
    </citation>
    <scope>NUCLEOTIDE SEQUENCE [LARGE SCALE GENOMIC DNA]</scope>
    <source>
        <strain>AB0057</strain>
    </source>
</reference>
<keyword id="KW-0002">3D-structure</keyword>
<keyword id="KW-0687">Ribonucleoprotein</keyword>
<keyword id="KW-0689">Ribosomal protein</keyword>
<keyword id="KW-0694">RNA-binding</keyword>
<keyword id="KW-0699">rRNA-binding</keyword>
<protein>
    <recommendedName>
        <fullName evidence="1">Large ribosomal subunit protein bL25</fullName>
    </recommendedName>
    <alternativeName>
        <fullName evidence="3">50S ribosomal protein L25</fullName>
    </alternativeName>
</protein>
<dbReference type="EMBL" id="CP001182">
    <property type="protein sequence ID" value="ACJ40675.1"/>
    <property type="molecule type" value="Genomic_DNA"/>
</dbReference>
<dbReference type="RefSeq" id="WP_001273422.1">
    <property type="nucleotide sequence ID" value="NC_011586.2"/>
</dbReference>
<dbReference type="PDB" id="6V39">
    <property type="method" value="EM"/>
    <property type="resolution" value="3.04 A"/>
    <property type="chains" value="U=1-98"/>
</dbReference>
<dbReference type="PDB" id="6V3A">
    <property type="method" value="EM"/>
    <property type="resolution" value="2.82 A"/>
    <property type="chains" value="U=1-98"/>
</dbReference>
<dbReference type="PDB" id="6V3B">
    <property type="method" value="EM"/>
    <property type="resolution" value="2.91 A"/>
    <property type="chains" value="U=1-98"/>
</dbReference>
<dbReference type="PDB" id="6V3D">
    <property type="method" value="EM"/>
    <property type="resolution" value="2.95 A"/>
    <property type="chains" value="U=1-98"/>
</dbReference>
<dbReference type="PDB" id="7M4V">
    <property type="method" value="EM"/>
    <property type="resolution" value="2.54 A"/>
    <property type="chains" value="U=1-98"/>
</dbReference>
<dbReference type="PDB" id="7M4W">
    <property type="method" value="EM"/>
    <property type="resolution" value="2.55 A"/>
    <property type="chains" value="U=1-98"/>
</dbReference>
<dbReference type="PDB" id="7M4X">
    <property type="method" value="EM"/>
    <property type="resolution" value="2.66 A"/>
    <property type="chains" value="U=1-98"/>
</dbReference>
<dbReference type="PDB" id="7M4Y">
    <property type="method" value="EM"/>
    <property type="resolution" value="2.50 A"/>
    <property type="chains" value="U=1-98"/>
</dbReference>
<dbReference type="PDB" id="7M4Z">
    <property type="method" value="EM"/>
    <property type="resolution" value="2.92 A"/>
    <property type="chains" value="U=1-98"/>
</dbReference>
<dbReference type="PDB" id="7RYF">
    <property type="method" value="EM"/>
    <property type="resolution" value="2.65 A"/>
    <property type="chains" value="U=1-98"/>
</dbReference>
<dbReference type="PDB" id="7RYG">
    <property type="method" value="EM"/>
    <property type="resolution" value="2.38 A"/>
    <property type="chains" value="U=1-98"/>
</dbReference>
<dbReference type="PDB" id="7RYH">
    <property type="method" value="EM"/>
    <property type="resolution" value="2.43 A"/>
    <property type="chains" value="U=1-98"/>
</dbReference>
<dbReference type="PDB" id="7UVV">
    <property type="method" value="EM"/>
    <property type="resolution" value="2.50 A"/>
    <property type="chains" value="U=1-98"/>
</dbReference>
<dbReference type="PDB" id="7UVW">
    <property type="method" value="EM"/>
    <property type="resolution" value="2.37 A"/>
    <property type="chains" value="U=1-98"/>
</dbReference>
<dbReference type="PDB" id="7UVX">
    <property type="method" value="EM"/>
    <property type="resolution" value="2.35 A"/>
    <property type="chains" value="U=1-98"/>
</dbReference>
<dbReference type="PDB" id="7UVY">
    <property type="method" value="EM"/>
    <property type="resolution" value="2.39 A"/>
    <property type="chains" value="U=1-98"/>
</dbReference>
<dbReference type="PDB" id="7UVZ">
    <property type="method" value="EM"/>
    <property type="resolution" value="2.21 A"/>
    <property type="chains" value="U=1-98"/>
</dbReference>
<dbReference type="PDB" id="7UW1">
    <property type="method" value="EM"/>
    <property type="resolution" value="2.21 A"/>
    <property type="chains" value="U=1-98"/>
</dbReference>
<dbReference type="PDBsum" id="6V39"/>
<dbReference type="PDBsum" id="6V3A"/>
<dbReference type="PDBsum" id="6V3B"/>
<dbReference type="PDBsum" id="6V3D"/>
<dbReference type="PDBsum" id="7M4V"/>
<dbReference type="PDBsum" id="7M4W"/>
<dbReference type="PDBsum" id="7M4X"/>
<dbReference type="PDBsum" id="7M4Y"/>
<dbReference type="PDBsum" id="7M4Z"/>
<dbReference type="PDBsum" id="7RYF"/>
<dbReference type="PDBsum" id="7RYG"/>
<dbReference type="PDBsum" id="7RYH"/>
<dbReference type="PDBsum" id="7UVV"/>
<dbReference type="PDBsum" id="7UVW"/>
<dbReference type="PDBsum" id="7UVX"/>
<dbReference type="PDBsum" id="7UVY"/>
<dbReference type="PDBsum" id="7UVZ"/>
<dbReference type="PDBsum" id="7UW1"/>
<dbReference type="EMDB" id="EMD-21030"/>
<dbReference type="EMDB" id="EMD-21031"/>
<dbReference type="EMDB" id="EMD-21032"/>
<dbReference type="EMDB" id="EMD-21033"/>
<dbReference type="EMDB" id="EMD-23667"/>
<dbReference type="EMDB" id="EMD-23668"/>
<dbReference type="EMDB" id="EMD-23669"/>
<dbReference type="EMDB" id="EMD-23670"/>
<dbReference type="EMDB" id="EMD-23671"/>
<dbReference type="EMDB" id="EMD-24738"/>
<dbReference type="EMDB" id="EMD-24739"/>
<dbReference type="EMDB" id="EMD-24740"/>
<dbReference type="EMDB" id="EMD-26817"/>
<dbReference type="EMDB" id="EMD-26818"/>
<dbReference type="EMDB" id="EMD-26819"/>
<dbReference type="EMDB" id="EMD-26820"/>
<dbReference type="EMDB" id="EMD-26821"/>
<dbReference type="EMDB" id="EMD-26822"/>
<dbReference type="SMR" id="B7I7B6"/>
<dbReference type="IntAct" id="B7I7B6">
    <property type="interactions" value="2"/>
</dbReference>
<dbReference type="KEGG" id="abn:AB57_0881"/>
<dbReference type="HOGENOM" id="CLU_137946_0_0_6"/>
<dbReference type="Proteomes" id="UP000007094">
    <property type="component" value="Chromosome"/>
</dbReference>
<dbReference type="GO" id="GO:0022625">
    <property type="term" value="C:cytosolic large ribosomal subunit"/>
    <property type="evidence" value="ECO:0007669"/>
    <property type="project" value="TreeGrafter"/>
</dbReference>
<dbReference type="GO" id="GO:0008097">
    <property type="term" value="F:5S rRNA binding"/>
    <property type="evidence" value="ECO:0007669"/>
    <property type="project" value="InterPro"/>
</dbReference>
<dbReference type="GO" id="GO:0003735">
    <property type="term" value="F:structural constituent of ribosome"/>
    <property type="evidence" value="ECO:0007669"/>
    <property type="project" value="InterPro"/>
</dbReference>
<dbReference type="GO" id="GO:0006412">
    <property type="term" value="P:translation"/>
    <property type="evidence" value="ECO:0007669"/>
    <property type="project" value="UniProtKB-UniRule"/>
</dbReference>
<dbReference type="CDD" id="cd00495">
    <property type="entry name" value="Ribosomal_L25_TL5_CTC"/>
    <property type="match status" value="1"/>
</dbReference>
<dbReference type="Gene3D" id="2.40.240.10">
    <property type="entry name" value="Ribosomal Protein L25, Chain P"/>
    <property type="match status" value="1"/>
</dbReference>
<dbReference type="HAMAP" id="MF_01336">
    <property type="entry name" value="Ribosomal_bL25"/>
    <property type="match status" value="1"/>
</dbReference>
<dbReference type="InterPro" id="IPR020056">
    <property type="entry name" value="Rbsml_bL25/Gln-tRNA_synth_N"/>
</dbReference>
<dbReference type="InterPro" id="IPR011035">
    <property type="entry name" value="Ribosomal_bL25/Gln-tRNA_synth"/>
</dbReference>
<dbReference type="InterPro" id="IPR020055">
    <property type="entry name" value="Ribosomal_bL25_short"/>
</dbReference>
<dbReference type="InterPro" id="IPR029751">
    <property type="entry name" value="Ribosomal_L25_dom"/>
</dbReference>
<dbReference type="InterPro" id="IPR020930">
    <property type="entry name" value="Ribosomal_uL5_bac-type"/>
</dbReference>
<dbReference type="NCBIfam" id="NF004612">
    <property type="entry name" value="PRK05943.1"/>
    <property type="match status" value="1"/>
</dbReference>
<dbReference type="PANTHER" id="PTHR33284">
    <property type="entry name" value="RIBOSOMAL PROTEIN L25/GLN-TRNA SYNTHETASE, ANTI-CODON-BINDING DOMAIN-CONTAINING PROTEIN"/>
    <property type="match status" value="1"/>
</dbReference>
<dbReference type="PANTHER" id="PTHR33284:SF1">
    <property type="entry name" value="RIBOSOMAL PROTEIN L25_GLN-TRNA SYNTHETASE, ANTI-CODON-BINDING DOMAIN-CONTAINING PROTEIN"/>
    <property type="match status" value="1"/>
</dbReference>
<dbReference type="Pfam" id="PF01386">
    <property type="entry name" value="Ribosomal_L25p"/>
    <property type="match status" value="1"/>
</dbReference>
<dbReference type="SUPFAM" id="SSF50715">
    <property type="entry name" value="Ribosomal protein L25-like"/>
    <property type="match status" value="1"/>
</dbReference>
<evidence type="ECO:0000255" key="1">
    <source>
        <dbReference type="HAMAP-Rule" id="MF_01336"/>
    </source>
</evidence>
<evidence type="ECO:0000256" key="2">
    <source>
        <dbReference type="SAM" id="MobiDB-lite"/>
    </source>
</evidence>
<evidence type="ECO:0000305" key="3"/>
<evidence type="ECO:0007829" key="4">
    <source>
        <dbReference type="PDB" id="7M4V"/>
    </source>
</evidence>
<sequence>MANFVLNAQARAEDKQGKGASRRLRRESLVPAIIYGGNAEPVAVTLELRELVKALESNVFFEEVVEIKVGDKVENVKIQALQRHPAKNTPMHADFKRA</sequence>
<accession>B7I7B6</accession>
<proteinExistence type="evidence at protein level"/>